<dbReference type="EC" id="4.1.1.31" evidence="1"/>
<dbReference type="EMBL" id="BX936398">
    <property type="protein sequence ID" value="CAH19348.1"/>
    <property type="molecule type" value="Genomic_DNA"/>
</dbReference>
<dbReference type="RefSeq" id="WP_011191467.1">
    <property type="nucleotide sequence ID" value="NC_006155.1"/>
</dbReference>
<dbReference type="SMR" id="Q66G74"/>
<dbReference type="GeneID" id="49787921"/>
<dbReference type="KEGG" id="ypo:BZ17_2488"/>
<dbReference type="KEGG" id="yps:YPTB0108"/>
<dbReference type="PATRIC" id="fig|273123.14.peg.2607"/>
<dbReference type="Proteomes" id="UP000001011">
    <property type="component" value="Chromosome"/>
</dbReference>
<dbReference type="GO" id="GO:0005829">
    <property type="term" value="C:cytosol"/>
    <property type="evidence" value="ECO:0007669"/>
    <property type="project" value="TreeGrafter"/>
</dbReference>
<dbReference type="GO" id="GO:0000287">
    <property type="term" value="F:magnesium ion binding"/>
    <property type="evidence" value="ECO:0007669"/>
    <property type="project" value="UniProtKB-UniRule"/>
</dbReference>
<dbReference type="GO" id="GO:0008964">
    <property type="term" value="F:phosphoenolpyruvate carboxylase activity"/>
    <property type="evidence" value="ECO:0007669"/>
    <property type="project" value="UniProtKB-UniRule"/>
</dbReference>
<dbReference type="GO" id="GO:0015977">
    <property type="term" value="P:carbon fixation"/>
    <property type="evidence" value="ECO:0007669"/>
    <property type="project" value="UniProtKB-UniRule"/>
</dbReference>
<dbReference type="GO" id="GO:0006107">
    <property type="term" value="P:oxaloacetate metabolic process"/>
    <property type="evidence" value="ECO:0007669"/>
    <property type="project" value="UniProtKB-UniRule"/>
</dbReference>
<dbReference type="GO" id="GO:0006099">
    <property type="term" value="P:tricarboxylic acid cycle"/>
    <property type="evidence" value="ECO:0007669"/>
    <property type="project" value="InterPro"/>
</dbReference>
<dbReference type="FunFam" id="1.20.1440.90:FF:000002">
    <property type="entry name" value="Phosphoenolpyruvate carboxylase"/>
    <property type="match status" value="1"/>
</dbReference>
<dbReference type="Gene3D" id="1.20.1440.90">
    <property type="entry name" value="Phosphoenolpyruvate/pyruvate domain"/>
    <property type="match status" value="1"/>
</dbReference>
<dbReference type="HAMAP" id="MF_00595">
    <property type="entry name" value="PEPcase_type1"/>
    <property type="match status" value="1"/>
</dbReference>
<dbReference type="InterPro" id="IPR021135">
    <property type="entry name" value="PEP_COase"/>
</dbReference>
<dbReference type="InterPro" id="IPR022805">
    <property type="entry name" value="PEP_COase_bac/pln-type"/>
</dbReference>
<dbReference type="InterPro" id="IPR018129">
    <property type="entry name" value="PEP_COase_Lys_AS"/>
</dbReference>
<dbReference type="InterPro" id="IPR033129">
    <property type="entry name" value="PEPCASE_His_AS"/>
</dbReference>
<dbReference type="InterPro" id="IPR015813">
    <property type="entry name" value="Pyrv/PenolPyrv_kinase-like_dom"/>
</dbReference>
<dbReference type="NCBIfam" id="NF000584">
    <property type="entry name" value="PRK00009.1"/>
    <property type="match status" value="1"/>
</dbReference>
<dbReference type="PANTHER" id="PTHR30523">
    <property type="entry name" value="PHOSPHOENOLPYRUVATE CARBOXYLASE"/>
    <property type="match status" value="1"/>
</dbReference>
<dbReference type="PANTHER" id="PTHR30523:SF6">
    <property type="entry name" value="PHOSPHOENOLPYRUVATE CARBOXYLASE"/>
    <property type="match status" value="1"/>
</dbReference>
<dbReference type="Pfam" id="PF00311">
    <property type="entry name" value="PEPcase"/>
    <property type="match status" value="1"/>
</dbReference>
<dbReference type="PRINTS" id="PR00150">
    <property type="entry name" value="PEPCARBXLASE"/>
</dbReference>
<dbReference type="SUPFAM" id="SSF51621">
    <property type="entry name" value="Phosphoenolpyruvate/pyruvate domain"/>
    <property type="match status" value="1"/>
</dbReference>
<dbReference type="PROSITE" id="PS00781">
    <property type="entry name" value="PEPCASE_1"/>
    <property type="match status" value="1"/>
</dbReference>
<dbReference type="PROSITE" id="PS00393">
    <property type="entry name" value="PEPCASE_2"/>
    <property type="match status" value="1"/>
</dbReference>
<sequence length="878" mass="98352">MNEQYSAMRSNVSMLGTLLGDTIKEALGEHILDRVETIRKLSKSSRAGNEASRQELLTTLQNLSNDELLPVARAFSQFLNLTNTAEQYHSISPHGEAASNPEALAQLFTRLKDKKLSDQDMRSAVDDLSIELVLTAHPTEITRRTLIHKLVEVNTCLSQLDHNDLADYERNKIMRRLRQLVAQSWHTDEIRKLRPSPVDEAKWGFAVVENSLWEGVPAFLREFNEQLENSLDYRLPVEAVPIRFTSWMGGDRDGNPNVTAEITRHVLLLSRWKATDLFLRDIQVLVSELSMSECTPELRELAGGEEVLEPYRQLMKNVRTQLTNTQAYLEARLKGERVLPPHDLLVSNDQLWEPLYACYQSLKACGMEIIANGQLLDTLRRVRCFGVPLVRIDVRQESTRHTDAIAELTRYLGLGDYESWSESDKQAFLVRELNSKRPLVPLKWEPSAETQEVLETCRVIAEAPQGSIAAYVISMAKVPSDVLAVHLLLKEAGCPFTLPVAPLFETLDDLNNADDVMTQLLGIDWYRGLIQGKQMVMIGYSDSAKDAGVMAASWAQYRAQDALIKTCEKAGITLTLFHGRGGSIGRGGAPAHAALLSQPPGSLKGGLRVTEQGEMIRFKFGLPEVTISSLALYAGAILEANLLPPPEPKKEWIEVMDLLSDASCDMYRSYVRENPEFVRYFRAATPELELGKLPLGSRPAKRRPDGGVESLRAIPWIFAWTQNRLMLPAWLGAGAGLQRAIDAGKRDVLATMCRDWPFFSTRIGMLEMVFAKADLWLAEYYDQRLVDKSLWPLGQQLRDQLAADIKVVLAIANDDHLMADLPWIAESIALRNVYTDPLNVLQAELLHRSRQQEHPDACVEQALMVTIAGVAAGMRNTG</sequence>
<comment type="function">
    <text evidence="1">Forms oxaloacetate, a four-carbon dicarboxylic acid source for the tricarboxylic acid cycle.</text>
</comment>
<comment type="catalytic activity">
    <reaction evidence="1">
        <text>oxaloacetate + phosphate = phosphoenolpyruvate + hydrogencarbonate</text>
        <dbReference type="Rhea" id="RHEA:28370"/>
        <dbReference type="ChEBI" id="CHEBI:16452"/>
        <dbReference type="ChEBI" id="CHEBI:17544"/>
        <dbReference type="ChEBI" id="CHEBI:43474"/>
        <dbReference type="ChEBI" id="CHEBI:58702"/>
        <dbReference type="EC" id="4.1.1.31"/>
    </reaction>
</comment>
<comment type="cofactor">
    <cofactor evidence="1">
        <name>Mg(2+)</name>
        <dbReference type="ChEBI" id="CHEBI:18420"/>
    </cofactor>
</comment>
<comment type="similarity">
    <text evidence="1">Belongs to the PEPCase type 1 family.</text>
</comment>
<gene>
    <name evidence="1" type="primary">ppc</name>
    <name type="ordered locus">YPTB0108</name>
</gene>
<proteinExistence type="inferred from homology"/>
<evidence type="ECO:0000255" key="1">
    <source>
        <dbReference type="HAMAP-Rule" id="MF_00595"/>
    </source>
</evidence>
<accession>Q66G74</accession>
<keyword id="KW-0120">Carbon dioxide fixation</keyword>
<keyword id="KW-0456">Lyase</keyword>
<keyword id="KW-0460">Magnesium</keyword>
<protein>
    <recommendedName>
        <fullName evidence="1">Phosphoenolpyruvate carboxylase</fullName>
        <shortName evidence="1">PEPC</shortName>
        <shortName evidence="1">PEPCase</shortName>
        <ecNumber evidence="1">4.1.1.31</ecNumber>
    </recommendedName>
</protein>
<feature type="chain" id="PRO_0000166655" description="Phosphoenolpyruvate carboxylase">
    <location>
        <begin position="1"/>
        <end position="878"/>
    </location>
</feature>
<feature type="active site" evidence="1">
    <location>
        <position position="137"/>
    </location>
</feature>
<feature type="active site" evidence="1">
    <location>
        <position position="545"/>
    </location>
</feature>
<organism>
    <name type="scientific">Yersinia pseudotuberculosis serotype I (strain IP32953)</name>
    <dbReference type="NCBI Taxonomy" id="273123"/>
    <lineage>
        <taxon>Bacteria</taxon>
        <taxon>Pseudomonadati</taxon>
        <taxon>Pseudomonadota</taxon>
        <taxon>Gammaproteobacteria</taxon>
        <taxon>Enterobacterales</taxon>
        <taxon>Yersiniaceae</taxon>
        <taxon>Yersinia</taxon>
    </lineage>
</organism>
<reference key="1">
    <citation type="journal article" date="2004" name="Proc. Natl. Acad. Sci. U.S.A.">
        <title>Insights into the evolution of Yersinia pestis through whole-genome comparison with Yersinia pseudotuberculosis.</title>
        <authorList>
            <person name="Chain P.S.G."/>
            <person name="Carniel E."/>
            <person name="Larimer F.W."/>
            <person name="Lamerdin J."/>
            <person name="Stoutland P.O."/>
            <person name="Regala W.M."/>
            <person name="Georgescu A.M."/>
            <person name="Vergez L.M."/>
            <person name="Land M.L."/>
            <person name="Motin V.L."/>
            <person name="Brubaker R.R."/>
            <person name="Fowler J."/>
            <person name="Hinnebusch J."/>
            <person name="Marceau M."/>
            <person name="Medigue C."/>
            <person name="Simonet M."/>
            <person name="Chenal-Francisque V."/>
            <person name="Souza B."/>
            <person name="Dacheux D."/>
            <person name="Elliott J.M."/>
            <person name="Derbise A."/>
            <person name="Hauser L.J."/>
            <person name="Garcia E."/>
        </authorList>
    </citation>
    <scope>NUCLEOTIDE SEQUENCE [LARGE SCALE GENOMIC DNA]</scope>
    <source>
        <strain>IP32953</strain>
    </source>
</reference>
<name>CAPP_YERPS</name>